<proteinExistence type="inferred from homology"/>
<keyword id="KW-1015">Disulfide bond</keyword>
<keyword id="KW-0964">Secreted</keyword>
<keyword id="KW-0732">Signal</keyword>
<name>YEBF_SALNS</name>
<comment type="subcellular location">
    <subcellularLocation>
        <location evidence="1">Secreted</location>
    </subcellularLocation>
</comment>
<comment type="similarity">
    <text evidence="1">Belongs to the YebF family.</text>
</comment>
<gene>
    <name evidence="1" type="primary">yebF</name>
    <name type="ordered locus">SNSL254_A2040</name>
</gene>
<evidence type="ECO:0000255" key="1">
    <source>
        <dbReference type="HAMAP-Rule" id="MF_01435"/>
    </source>
</evidence>
<evidence type="ECO:0000255" key="2">
    <source>
        <dbReference type="PROSITE-ProRule" id="PRU01323"/>
    </source>
</evidence>
<feature type="signal peptide" evidence="1">
    <location>
        <begin position="1"/>
        <end position="21"/>
    </location>
</feature>
<feature type="chain" id="PRO_1000145839" description="Protein YebF">
    <location>
        <begin position="22"/>
        <end position="117"/>
    </location>
</feature>
<feature type="domain" description="YebF/Cmi" evidence="2">
    <location>
        <begin position="30"/>
        <end position="117"/>
    </location>
</feature>
<feature type="disulfide bond" evidence="2">
    <location>
        <begin position="34"/>
        <end position="107"/>
    </location>
</feature>
<organism>
    <name type="scientific">Salmonella newport (strain SL254)</name>
    <dbReference type="NCBI Taxonomy" id="423368"/>
    <lineage>
        <taxon>Bacteria</taxon>
        <taxon>Pseudomonadati</taxon>
        <taxon>Pseudomonadota</taxon>
        <taxon>Gammaproteobacteria</taxon>
        <taxon>Enterobacterales</taxon>
        <taxon>Enterobacteriaceae</taxon>
        <taxon>Salmonella</taxon>
    </lineage>
</organism>
<accession>B4SVD1</accession>
<protein>
    <recommendedName>
        <fullName evidence="1">Protein YebF</fullName>
    </recommendedName>
</protein>
<sequence length="117" mass="12774">MNKRGALLSLLLLSASVSAFAASTESKSVKFPQCEGLDAAGIAASVKRDYQQNRIVRWADDQKKVGQADPVAWVNVQDVVGQNDKWTVPLTVRGKSADIHYQVIVDCKAGKAEYKPR</sequence>
<dbReference type="EMBL" id="CP001113">
    <property type="protein sequence ID" value="ACF64528.1"/>
    <property type="molecule type" value="Genomic_DNA"/>
</dbReference>
<dbReference type="RefSeq" id="WP_001042123.1">
    <property type="nucleotide sequence ID" value="NZ_CCMR01000003.1"/>
</dbReference>
<dbReference type="SMR" id="B4SVD1"/>
<dbReference type="KEGG" id="see:SNSL254_A2040"/>
<dbReference type="HOGENOM" id="CLU_161319_1_0_6"/>
<dbReference type="Proteomes" id="UP000008824">
    <property type="component" value="Chromosome"/>
</dbReference>
<dbReference type="GO" id="GO:0005576">
    <property type="term" value="C:extracellular region"/>
    <property type="evidence" value="ECO:0007669"/>
    <property type="project" value="UniProtKB-SubCell"/>
</dbReference>
<dbReference type="Gene3D" id="3.10.450.300">
    <property type="entry name" value="YebF/Colicin-M immunity protein"/>
    <property type="match status" value="1"/>
</dbReference>
<dbReference type="HAMAP" id="MF_01435">
    <property type="entry name" value="YebF"/>
    <property type="match status" value="1"/>
</dbReference>
<dbReference type="InterPro" id="IPR020236">
    <property type="entry name" value="Uncharacterised_YebF"/>
</dbReference>
<dbReference type="InterPro" id="IPR038703">
    <property type="entry name" value="YebF/Cmi_sf"/>
</dbReference>
<dbReference type="InterPro" id="IPR025603">
    <property type="entry name" value="YebF/ColM_immunity"/>
</dbReference>
<dbReference type="NCBIfam" id="NF010224">
    <property type="entry name" value="PRK13680.1"/>
    <property type="match status" value="1"/>
</dbReference>
<dbReference type="NCBIfam" id="NF041240">
    <property type="entry name" value="YebF_not_Cmi"/>
    <property type="match status" value="1"/>
</dbReference>
<dbReference type="Pfam" id="PF13995">
    <property type="entry name" value="YebF"/>
    <property type="match status" value="1"/>
</dbReference>
<dbReference type="PROSITE" id="PS51979">
    <property type="entry name" value="YEBF_CMI"/>
    <property type="match status" value="1"/>
</dbReference>
<reference key="1">
    <citation type="journal article" date="2011" name="J. Bacteriol.">
        <title>Comparative genomics of 28 Salmonella enterica isolates: evidence for CRISPR-mediated adaptive sublineage evolution.</title>
        <authorList>
            <person name="Fricke W.F."/>
            <person name="Mammel M.K."/>
            <person name="McDermott P.F."/>
            <person name="Tartera C."/>
            <person name="White D.G."/>
            <person name="Leclerc J.E."/>
            <person name="Ravel J."/>
            <person name="Cebula T.A."/>
        </authorList>
    </citation>
    <scope>NUCLEOTIDE SEQUENCE [LARGE SCALE GENOMIC DNA]</scope>
    <source>
        <strain>SL254</strain>
    </source>
</reference>